<evidence type="ECO:0000255" key="1">
    <source>
        <dbReference type="HAMAP-Rule" id="MF_00185"/>
    </source>
</evidence>
<keyword id="KW-0067">ATP-binding</keyword>
<keyword id="KW-0460">Magnesium</keyword>
<keyword id="KW-0547">Nucleotide-binding</keyword>
<keyword id="KW-1185">Reference proteome</keyword>
<keyword id="KW-0808">Transferase</keyword>
<keyword id="KW-0819">tRNA processing</keyword>
<name>MIAA_FUSNN</name>
<protein>
    <recommendedName>
        <fullName evidence="1">tRNA dimethylallyltransferase</fullName>
        <ecNumber evidence="1">2.5.1.75</ecNumber>
    </recommendedName>
    <alternativeName>
        <fullName evidence="1">Dimethylallyl diphosphate:tRNA dimethylallyltransferase</fullName>
        <shortName evidence="1">DMAPP:tRNA dimethylallyltransferase</shortName>
        <shortName evidence="1">DMATase</shortName>
    </alternativeName>
    <alternativeName>
        <fullName evidence="1">Isopentenyl-diphosphate:tRNA isopentenyltransferase</fullName>
        <shortName evidence="1">IPP transferase</shortName>
        <shortName evidence="1">IPPT</shortName>
        <shortName evidence="1">IPTase</shortName>
    </alternativeName>
</protein>
<feature type="chain" id="PRO_0000163919" description="tRNA dimethylallyltransferase">
    <location>
        <begin position="1"/>
        <end position="303"/>
    </location>
</feature>
<feature type="region of interest" description="Interaction with substrate tRNA" evidence="1">
    <location>
        <begin position="37"/>
        <end position="40"/>
    </location>
</feature>
<feature type="binding site" evidence="1">
    <location>
        <begin position="12"/>
        <end position="19"/>
    </location>
    <ligand>
        <name>ATP</name>
        <dbReference type="ChEBI" id="CHEBI:30616"/>
    </ligand>
</feature>
<feature type="binding site" evidence="1">
    <location>
        <begin position="14"/>
        <end position="19"/>
    </location>
    <ligand>
        <name>substrate</name>
    </ligand>
</feature>
<feature type="site" description="Interaction with substrate tRNA" evidence="1">
    <location>
        <position position="101"/>
    </location>
</feature>
<comment type="function">
    <text evidence="1">Catalyzes the transfer of a dimethylallyl group onto the adenine at position 37 in tRNAs that read codons beginning with uridine, leading to the formation of N6-(dimethylallyl)adenosine (i(6)A).</text>
</comment>
<comment type="catalytic activity">
    <reaction evidence="1">
        <text>adenosine(37) in tRNA + dimethylallyl diphosphate = N(6)-dimethylallyladenosine(37) in tRNA + diphosphate</text>
        <dbReference type="Rhea" id="RHEA:26482"/>
        <dbReference type="Rhea" id="RHEA-COMP:10162"/>
        <dbReference type="Rhea" id="RHEA-COMP:10375"/>
        <dbReference type="ChEBI" id="CHEBI:33019"/>
        <dbReference type="ChEBI" id="CHEBI:57623"/>
        <dbReference type="ChEBI" id="CHEBI:74411"/>
        <dbReference type="ChEBI" id="CHEBI:74415"/>
        <dbReference type="EC" id="2.5.1.75"/>
    </reaction>
</comment>
<comment type="cofactor">
    <cofactor evidence="1">
        <name>Mg(2+)</name>
        <dbReference type="ChEBI" id="CHEBI:18420"/>
    </cofactor>
</comment>
<comment type="subunit">
    <text evidence="1">Monomer.</text>
</comment>
<comment type="similarity">
    <text evidence="1">Belongs to the IPP transferase family.</text>
</comment>
<sequence>MNILNKAIVIAGPTGVGKTKISIDLAKKLNAEIISSDSAQVYRGLNIGTAKIREEEKEGIKHHLIDIVEPVLKYSVGNFEKDVNKILNQNSEKNFLLVGGTGLYLNSVTNGLSILPEADKKTREYLTTLNNQALLELALKYDEEATKEIHPNNRVRLERVVEVFLLTGQKFSELSKKNIKNNNFKFLKIALERNRENLYDRINKRVDIMFAQGLVDEVKNLYKIYGDKLYSLNIIGYNEIIDYINAKISLDEAVYQIKLNSRHYAKRQFTWFKADKEYQWFNLDGISEQEIVKTIYTLFNIKA</sequence>
<dbReference type="EC" id="2.5.1.75" evidence="1"/>
<dbReference type="EMBL" id="AE009951">
    <property type="protein sequence ID" value="AAL94016.1"/>
    <property type="molecule type" value="Genomic_DNA"/>
</dbReference>
<dbReference type="RefSeq" id="NP_602717.1">
    <property type="nucleotide sequence ID" value="NC_003454.1"/>
</dbReference>
<dbReference type="RefSeq" id="WP_005903969.1">
    <property type="nucleotide sequence ID" value="NZ_OZ209243.1"/>
</dbReference>
<dbReference type="SMR" id="Q8R5Z6"/>
<dbReference type="FunCoup" id="Q8R5Z6">
    <property type="interactions" value="362"/>
</dbReference>
<dbReference type="STRING" id="190304.FN1917"/>
<dbReference type="PaxDb" id="190304-FN1917"/>
<dbReference type="EnsemblBacteria" id="AAL94016">
    <property type="protein sequence ID" value="AAL94016"/>
    <property type="gene ID" value="FN1917"/>
</dbReference>
<dbReference type="GeneID" id="79783066"/>
<dbReference type="KEGG" id="fnu:FN1917"/>
<dbReference type="PATRIC" id="fig|190304.8.peg.392"/>
<dbReference type="eggNOG" id="COG0324">
    <property type="taxonomic scope" value="Bacteria"/>
</dbReference>
<dbReference type="HOGENOM" id="CLU_032616_0_1_0"/>
<dbReference type="InParanoid" id="Q8R5Z6"/>
<dbReference type="BioCyc" id="FNUC190304:G1FZS-411-MONOMER"/>
<dbReference type="Proteomes" id="UP000002521">
    <property type="component" value="Chromosome"/>
</dbReference>
<dbReference type="GO" id="GO:0005524">
    <property type="term" value="F:ATP binding"/>
    <property type="evidence" value="ECO:0007669"/>
    <property type="project" value="UniProtKB-UniRule"/>
</dbReference>
<dbReference type="GO" id="GO:0052381">
    <property type="term" value="F:tRNA dimethylallyltransferase activity"/>
    <property type="evidence" value="ECO:0000318"/>
    <property type="project" value="GO_Central"/>
</dbReference>
<dbReference type="GO" id="GO:0006400">
    <property type="term" value="P:tRNA modification"/>
    <property type="evidence" value="ECO:0000318"/>
    <property type="project" value="GO_Central"/>
</dbReference>
<dbReference type="Gene3D" id="1.10.20.140">
    <property type="match status" value="1"/>
</dbReference>
<dbReference type="Gene3D" id="3.40.50.300">
    <property type="entry name" value="P-loop containing nucleotide triphosphate hydrolases"/>
    <property type="match status" value="1"/>
</dbReference>
<dbReference type="HAMAP" id="MF_00185">
    <property type="entry name" value="IPP_trans"/>
    <property type="match status" value="1"/>
</dbReference>
<dbReference type="InterPro" id="IPR039657">
    <property type="entry name" value="Dimethylallyltransferase"/>
</dbReference>
<dbReference type="InterPro" id="IPR008144">
    <property type="entry name" value="Guanylate_kin-like_dom"/>
</dbReference>
<dbReference type="InterPro" id="IPR018022">
    <property type="entry name" value="IPT"/>
</dbReference>
<dbReference type="InterPro" id="IPR027417">
    <property type="entry name" value="P-loop_NTPase"/>
</dbReference>
<dbReference type="NCBIfam" id="TIGR00174">
    <property type="entry name" value="miaA"/>
    <property type="match status" value="1"/>
</dbReference>
<dbReference type="PANTHER" id="PTHR11088">
    <property type="entry name" value="TRNA DIMETHYLALLYLTRANSFERASE"/>
    <property type="match status" value="1"/>
</dbReference>
<dbReference type="PANTHER" id="PTHR11088:SF60">
    <property type="entry name" value="TRNA DIMETHYLALLYLTRANSFERASE"/>
    <property type="match status" value="1"/>
</dbReference>
<dbReference type="Pfam" id="PF01715">
    <property type="entry name" value="IPPT"/>
    <property type="match status" value="1"/>
</dbReference>
<dbReference type="SUPFAM" id="SSF52540">
    <property type="entry name" value="P-loop containing nucleoside triphosphate hydrolases"/>
    <property type="match status" value="2"/>
</dbReference>
<proteinExistence type="inferred from homology"/>
<reference key="1">
    <citation type="journal article" date="2002" name="J. Bacteriol.">
        <title>Genome sequence and analysis of the oral bacterium Fusobacterium nucleatum strain ATCC 25586.</title>
        <authorList>
            <person name="Kapatral V."/>
            <person name="Anderson I."/>
            <person name="Ivanova N."/>
            <person name="Reznik G."/>
            <person name="Los T."/>
            <person name="Lykidis A."/>
            <person name="Bhattacharyya A."/>
            <person name="Bartman A."/>
            <person name="Gardner W."/>
            <person name="Grechkin G."/>
            <person name="Zhu L."/>
            <person name="Vasieva O."/>
            <person name="Chu L."/>
            <person name="Kogan Y."/>
            <person name="Chaga O."/>
            <person name="Goltsman E."/>
            <person name="Bernal A."/>
            <person name="Larsen N."/>
            <person name="D'Souza M."/>
            <person name="Walunas T."/>
            <person name="Pusch G."/>
            <person name="Haselkorn R."/>
            <person name="Fonstein M."/>
            <person name="Kyrpides N.C."/>
            <person name="Overbeek R."/>
        </authorList>
    </citation>
    <scope>NUCLEOTIDE SEQUENCE [LARGE SCALE GENOMIC DNA]</scope>
    <source>
        <strain>ATCC 25586 / DSM 15643 / BCRC 10681 / CIP 101130 / JCM 8532 / KCTC 2640 / LMG 13131 / VPI 4355</strain>
    </source>
</reference>
<accession>Q8R5Z6</accession>
<gene>
    <name evidence="1" type="primary">miaA</name>
    <name type="ordered locus">FN1917</name>
</gene>
<organism>
    <name type="scientific">Fusobacterium nucleatum subsp. nucleatum (strain ATCC 25586 / DSM 15643 / BCRC 10681 / CIP 101130 / JCM 8532 / KCTC 2640 / LMG 13131 / VPI 4355)</name>
    <dbReference type="NCBI Taxonomy" id="190304"/>
    <lineage>
        <taxon>Bacteria</taxon>
        <taxon>Fusobacteriati</taxon>
        <taxon>Fusobacteriota</taxon>
        <taxon>Fusobacteriia</taxon>
        <taxon>Fusobacteriales</taxon>
        <taxon>Fusobacteriaceae</taxon>
        <taxon>Fusobacterium</taxon>
    </lineage>
</organism>